<accession>B2S1U9</accession>
<comment type="function">
    <text evidence="1">Binds together with bS18 to 16S ribosomal RNA.</text>
</comment>
<comment type="similarity">
    <text evidence="1">Belongs to the bacterial ribosomal protein bS6 family.</text>
</comment>
<sequence length="131" mass="15688">MIKKYEACFLFKSEELEYKVALEDVKKQLTAFNASDFVENSLGERALEYSIRKQSRGRYEIIEFKMDSSNLKELEVQLRLIKNLLRYMILVKINKKVNVKKVKRRNFREFKDNRDTREKELPESTADVKVD</sequence>
<feature type="chain" id="PRO_1000120712" description="Small ribosomal subunit protein bS6">
    <location>
        <begin position="1"/>
        <end position="131"/>
    </location>
</feature>
<gene>
    <name evidence="1" type="primary">rpsF</name>
    <name type="ordered locus">BH0115</name>
</gene>
<reference key="1">
    <citation type="submission" date="2004-12" db="EMBL/GenBank/DDBJ databases">
        <title>The genome sequence of Borrelia hermsii and Borrelia turicatae: comparative analysis of two agents of endemic N. America relapsing fever.</title>
        <authorList>
            <person name="Porcella S.F."/>
            <person name="Raffel S.J."/>
            <person name="Schrumpf M.E."/>
            <person name="Montgomery B."/>
            <person name="Smith T."/>
            <person name="Schwan T.G."/>
        </authorList>
    </citation>
    <scope>NUCLEOTIDE SEQUENCE [LARGE SCALE GENOMIC DNA]</scope>
    <source>
        <strain>HS1 / DAH</strain>
    </source>
</reference>
<protein>
    <recommendedName>
        <fullName evidence="1">Small ribosomal subunit protein bS6</fullName>
    </recommendedName>
    <alternativeName>
        <fullName evidence="2">30S ribosomal protein S6</fullName>
    </alternativeName>
</protein>
<evidence type="ECO:0000255" key="1">
    <source>
        <dbReference type="HAMAP-Rule" id="MF_00360"/>
    </source>
</evidence>
<evidence type="ECO:0000305" key="2"/>
<name>RS6_BORHD</name>
<keyword id="KW-0687">Ribonucleoprotein</keyword>
<keyword id="KW-0689">Ribosomal protein</keyword>
<keyword id="KW-0694">RNA-binding</keyword>
<keyword id="KW-0699">rRNA-binding</keyword>
<dbReference type="EMBL" id="CP000048">
    <property type="protein sequence ID" value="AAX16636.1"/>
    <property type="molecule type" value="Genomic_DNA"/>
</dbReference>
<dbReference type="RefSeq" id="WP_012421893.1">
    <property type="nucleotide sequence ID" value="NZ_CP073136.1"/>
</dbReference>
<dbReference type="SMR" id="B2S1U9"/>
<dbReference type="GeneID" id="71842926"/>
<dbReference type="KEGG" id="bhr:BH0115"/>
<dbReference type="HOGENOM" id="CLU_1902635_0_0_12"/>
<dbReference type="Proteomes" id="UP000008834">
    <property type="component" value="Chromosome"/>
</dbReference>
<dbReference type="GO" id="GO:1990904">
    <property type="term" value="C:ribonucleoprotein complex"/>
    <property type="evidence" value="ECO:0007669"/>
    <property type="project" value="UniProtKB-KW"/>
</dbReference>
<dbReference type="GO" id="GO:0005840">
    <property type="term" value="C:ribosome"/>
    <property type="evidence" value="ECO:0007669"/>
    <property type="project" value="UniProtKB-KW"/>
</dbReference>
<dbReference type="GO" id="GO:0019843">
    <property type="term" value="F:rRNA binding"/>
    <property type="evidence" value="ECO:0007669"/>
    <property type="project" value="UniProtKB-UniRule"/>
</dbReference>
<dbReference type="GO" id="GO:0003735">
    <property type="term" value="F:structural constituent of ribosome"/>
    <property type="evidence" value="ECO:0007669"/>
    <property type="project" value="InterPro"/>
</dbReference>
<dbReference type="GO" id="GO:0006412">
    <property type="term" value="P:translation"/>
    <property type="evidence" value="ECO:0007669"/>
    <property type="project" value="UniProtKB-UniRule"/>
</dbReference>
<dbReference type="CDD" id="cd00473">
    <property type="entry name" value="bS6"/>
    <property type="match status" value="1"/>
</dbReference>
<dbReference type="Gene3D" id="3.30.70.60">
    <property type="match status" value="1"/>
</dbReference>
<dbReference type="HAMAP" id="MF_00360">
    <property type="entry name" value="Ribosomal_bS6"/>
    <property type="match status" value="1"/>
</dbReference>
<dbReference type="InterPro" id="IPR000529">
    <property type="entry name" value="Ribosomal_bS6"/>
</dbReference>
<dbReference type="InterPro" id="IPR035980">
    <property type="entry name" value="Ribosomal_bS6_sf"/>
</dbReference>
<dbReference type="InterPro" id="IPR020814">
    <property type="entry name" value="Ribosomal_S6_plastid/chlpt"/>
</dbReference>
<dbReference type="InterPro" id="IPR014717">
    <property type="entry name" value="Transl_elong_EF1B/ribsomal_bS6"/>
</dbReference>
<dbReference type="NCBIfam" id="TIGR00166">
    <property type="entry name" value="S6"/>
    <property type="match status" value="1"/>
</dbReference>
<dbReference type="Pfam" id="PF01250">
    <property type="entry name" value="Ribosomal_S6"/>
    <property type="match status" value="1"/>
</dbReference>
<dbReference type="SUPFAM" id="SSF54995">
    <property type="entry name" value="Ribosomal protein S6"/>
    <property type="match status" value="1"/>
</dbReference>
<organism>
    <name type="scientific">Borrelia hermsii (strain HS1 / DAH)</name>
    <dbReference type="NCBI Taxonomy" id="314723"/>
    <lineage>
        <taxon>Bacteria</taxon>
        <taxon>Pseudomonadati</taxon>
        <taxon>Spirochaetota</taxon>
        <taxon>Spirochaetia</taxon>
        <taxon>Spirochaetales</taxon>
        <taxon>Borreliaceae</taxon>
        <taxon>Borrelia</taxon>
    </lineage>
</organism>
<proteinExistence type="inferred from homology"/>